<reference key="1">
    <citation type="journal article" date="1993" name="Mol. Microbiol.">
        <title>DNA sequence, structure and gene expression of mycobacteriophage L5: a phage system for mycobacterial genetics.</title>
        <authorList>
            <person name="Hatfull G.F."/>
            <person name="Sarkis G.J."/>
        </authorList>
    </citation>
    <scope>NUCLEOTIDE SEQUENCE [LARGE SCALE GENOMIC DNA]</scope>
</reference>
<gene>
    <name type="primary">68</name>
</gene>
<sequence>MTNWDPNHPSLRSPIAPHETACVLRMHRAGYKGRATMKILKLRGTRLMNQMQRALDAETHAARAGRPIHDALIDPKKVK</sequence>
<proteinExistence type="predicted"/>
<accession>Q05282</accession>
<organismHost>
    <name type="scientific">Mycobacterium</name>
    <dbReference type="NCBI Taxonomy" id="1763"/>
</organismHost>
<feature type="chain" id="PRO_0000164809" description="Gene 68 protein">
    <location>
        <begin position="1"/>
        <end position="79"/>
    </location>
</feature>
<feature type="region of interest" description="Disordered" evidence="1">
    <location>
        <begin position="58"/>
        <end position="79"/>
    </location>
</feature>
<name>VG68_BPML5</name>
<protein>
    <recommendedName>
        <fullName>Gene 68 protein</fullName>
    </recommendedName>
    <alternativeName>
        <fullName>Gp68</fullName>
    </alternativeName>
</protein>
<organism>
    <name type="scientific">Mycobacterium phage L5</name>
    <name type="common">Mycobacteriophage L5</name>
    <dbReference type="NCBI Taxonomy" id="31757"/>
    <lineage>
        <taxon>Viruses</taxon>
        <taxon>Duplodnaviria</taxon>
        <taxon>Heunggongvirae</taxon>
        <taxon>Uroviricota</taxon>
        <taxon>Caudoviricetes</taxon>
        <taxon>Fromanvirus</taxon>
    </lineage>
</organism>
<evidence type="ECO:0000256" key="1">
    <source>
        <dbReference type="SAM" id="MobiDB-lite"/>
    </source>
</evidence>
<keyword id="KW-1185">Reference proteome</keyword>
<dbReference type="EMBL" id="Z18946">
    <property type="protein sequence ID" value="CAA79444.1"/>
    <property type="molecule type" value="Genomic_DNA"/>
</dbReference>
<dbReference type="PIR" id="S31013">
    <property type="entry name" value="S31013"/>
</dbReference>
<dbReference type="RefSeq" id="NP_039732.1">
    <property type="nucleotide sequence ID" value="NC_001335.1"/>
</dbReference>
<dbReference type="GeneID" id="2942985"/>
<dbReference type="KEGG" id="vg:2942985"/>
<dbReference type="OrthoDB" id="14908at10239"/>
<dbReference type="Proteomes" id="UP000002123">
    <property type="component" value="Genome"/>
</dbReference>
<dbReference type="InterPro" id="IPR035343">
    <property type="entry name" value="Gp68"/>
</dbReference>
<dbReference type="Pfam" id="PF17469">
    <property type="entry name" value="GP68"/>
    <property type="match status" value="1"/>
</dbReference>